<proteinExistence type="inferred from homology"/>
<dbReference type="EC" id="2.1.1.297" evidence="1"/>
<dbReference type="EMBL" id="AE013218">
    <property type="protein sequence ID" value="AAM67733.1"/>
    <property type="molecule type" value="Genomic_DNA"/>
</dbReference>
<dbReference type="RefSeq" id="WP_011053700.1">
    <property type="nucleotide sequence ID" value="NC_004061.1"/>
</dbReference>
<dbReference type="SMR" id="Q8K9W9"/>
<dbReference type="STRING" id="198804.BUsg_166"/>
<dbReference type="GeneID" id="93003635"/>
<dbReference type="KEGG" id="bas:BUsg_166"/>
<dbReference type="eggNOG" id="COG2890">
    <property type="taxonomic scope" value="Bacteria"/>
</dbReference>
<dbReference type="HOGENOM" id="CLU_018398_3_0_6"/>
<dbReference type="Proteomes" id="UP000000416">
    <property type="component" value="Chromosome"/>
</dbReference>
<dbReference type="GO" id="GO:0003676">
    <property type="term" value="F:nucleic acid binding"/>
    <property type="evidence" value="ECO:0007669"/>
    <property type="project" value="InterPro"/>
</dbReference>
<dbReference type="GO" id="GO:0102559">
    <property type="term" value="F:protein-(glutamine-N5) methyltransferase activity"/>
    <property type="evidence" value="ECO:0007669"/>
    <property type="project" value="UniProtKB-EC"/>
</dbReference>
<dbReference type="GO" id="GO:0036009">
    <property type="term" value="F:protein-glutamine N-methyltransferase activity"/>
    <property type="evidence" value="ECO:0007669"/>
    <property type="project" value="UniProtKB-UniRule"/>
</dbReference>
<dbReference type="GO" id="GO:0032259">
    <property type="term" value="P:methylation"/>
    <property type="evidence" value="ECO:0007669"/>
    <property type="project" value="UniProtKB-KW"/>
</dbReference>
<dbReference type="CDD" id="cd02440">
    <property type="entry name" value="AdoMet_MTases"/>
    <property type="match status" value="1"/>
</dbReference>
<dbReference type="FunFam" id="3.40.50.150:FF:000053">
    <property type="entry name" value="Release factor glutamine methyltransferase"/>
    <property type="match status" value="1"/>
</dbReference>
<dbReference type="Gene3D" id="1.10.8.10">
    <property type="entry name" value="DNA helicase RuvA subunit, C-terminal domain"/>
    <property type="match status" value="1"/>
</dbReference>
<dbReference type="Gene3D" id="3.40.50.150">
    <property type="entry name" value="Vaccinia Virus protein VP39"/>
    <property type="match status" value="1"/>
</dbReference>
<dbReference type="HAMAP" id="MF_02126">
    <property type="entry name" value="RF_methyltr_PrmC"/>
    <property type="match status" value="1"/>
</dbReference>
<dbReference type="InterPro" id="IPR002052">
    <property type="entry name" value="DNA_methylase_N6_adenine_CS"/>
</dbReference>
<dbReference type="InterPro" id="IPR004556">
    <property type="entry name" value="HemK-like"/>
</dbReference>
<dbReference type="InterPro" id="IPR050320">
    <property type="entry name" value="N5-glutamine_MTase"/>
</dbReference>
<dbReference type="InterPro" id="IPR040758">
    <property type="entry name" value="PrmC_N"/>
</dbReference>
<dbReference type="InterPro" id="IPR019874">
    <property type="entry name" value="RF_methyltr_PrmC"/>
</dbReference>
<dbReference type="InterPro" id="IPR029063">
    <property type="entry name" value="SAM-dependent_MTases_sf"/>
</dbReference>
<dbReference type="InterPro" id="IPR007848">
    <property type="entry name" value="Small_mtfrase_dom"/>
</dbReference>
<dbReference type="NCBIfam" id="TIGR00536">
    <property type="entry name" value="hemK_fam"/>
    <property type="match status" value="1"/>
</dbReference>
<dbReference type="NCBIfam" id="TIGR03534">
    <property type="entry name" value="RF_mod_PrmC"/>
    <property type="match status" value="1"/>
</dbReference>
<dbReference type="PANTHER" id="PTHR18895">
    <property type="entry name" value="HEMK METHYLTRANSFERASE"/>
    <property type="match status" value="1"/>
</dbReference>
<dbReference type="PANTHER" id="PTHR18895:SF74">
    <property type="entry name" value="MTRF1L RELEASE FACTOR GLUTAMINE METHYLTRANSFERASE"/>
    <property type="match status" value="1"/>
</dbReference>
<dbReference type="Pfam" id="PF05175">
    <property type="entry name" value="MTS"/>
    <property type="match status" value="1"/>
</dbReference>
<dbReference type="Pfam" id="PF17827">
    <property type="entry name" value="PrmC_N"/>
    <property type="match status" value="1"/>
</dbReference>
<dbReference type="SUPFAM" id="SSF53335">
    <property type="entry name" value="S-adenosyl-L-methionine-dependent methyltransferases"/>
    <property type="match status" value="1"/>
</dbReference>
<comment type="function">
    <text evidence="1">Methylates the class 1 translation termination release factors RF1/PrfA and RF2/PrfB on the glutamine residue of the universally conserved GGQ motif.</text>
</comment>
<comment type="catalytic activity">
    <reaction evidence="1">
        <text>L-glutaminyl-[peptide chain release factor] + S-adenosyl-L-methionine = N(5)-methyl-L-glutaminyl-[peptide chain release factor] + S-adenosyl-L-homocysteine + H(+)</text>
        <dbReference type="Rhea" id="RHEA:42896"/>
        <dbReference type="Rhea" id="RHEA-COMP:10271"/>
        <dbReference type="Rhea" id="RHEA-COMP:10272"/>
        <dbReference type="ChEBI" id="CHEBI:15378"/>
        <dbReference type="ChEBI" id="CHEBI:30011"/>
        <dbReference type="ChEBI" id="CHEBI:57856"/>
        <dbReference type="ChEBI" id="CHEBI:59789"/>
        <dbReference type="ChEBI" id="CHEBI:61891"/>
        <dbReference type="EC" id="2.1.1.297"/>
    </reaction>
</comment>
<comment type="similarity">
    <text evidence="1">Belongs to the protein N5-glutamine methyltransferase family. PrmC subfamily.</text>
</comment>
<name>PRMC_BUCAP</name>
<keyword id="KW-0489">Methyltransferase</keyword>
<keyword id="KW-0949">S-adenosyl-L-methionine</keyword>
<keyword id="KW-0808">Transferase</keyword>
<gene>
    <name evidence="1" type="primary">prmC</name>
    <name type="synonym">hemK</name>
    <name type="ordered locus">BUsg_166</name>
</gene>
<feature type="chain" id="PRO_0000157162" description="Release factor glutamine methyltransferase">
    <location>
        <begin position="1"/>
        <end position="275"/>
    </location>
</feature>
<feature type="binding site" evidence="1">
    <location>
        <begin position="117"/>
        <end position="121"/>
    </location>
    <ligand>
        <name>S-adenosyl-L-methionine</name>
        <dbReference type="ChEBI" id="CHEBI:59789"/>
    </ligand>
</feature>
<feature type="binding site" evidence="1">
    <location>
        <position position="140"/>
    </location>
    <ligand>
        <name>S-adenosyl-L-methionine</name>
        <dbReference type="ChEBI" id="CHEBI:59789"/>
    </ligand>
</feature>
<feature type="binding site" evidence="1">
    <location>
        <position position="168"/>
    </location>
    <ligand>
        <name>S-adenosyl-L-methionine</name>
        <dbReference type="ChEBI" id="CHEBI:59789"/>
    </ligand>
</feature>
<feature type="binding site" evidence="1">
    <location>
        <begin position="182"/>
        <end position="185"/>
    </location>
    <ligand>
        <name>substrate</name>
    </ligand>
</feature>
<feature type="binding site" evidence="1">
    <location>
        <position position="182"/>
    </location>
    <ligand>
        <name>S-adenosyl-L-methionine</name>
        <dbReference type="ChEBI" id="CHEBI:59789"/>
    </ligand>
</feature>
<organism>
    <name type="scientific">Buchnera aphidicola subsp. Schizaphis graminum (strain Sg)</name>
    <dbReference type="NCBI Taxonomy" id="198804"/>
    <lineage>
        <taxon>Bacteria</taxon>
        <taxon>Pseudomonadati</taxon>
        <taxon>Pseudomonadota</taxon>
        <taxon>Gammaproteobacteria</taxon>
        <taxon>Enterobacterales</taxon>
        <taxon>Erwiniaceae</taxon>
        <taxon>Buchnera</taxon>
    </lineage>
</organism>
<sequence length="275" mass="32052">MNINYWLKKAIKKLSHCENPRYEAEILLSHVLKCTRIAIIINQEIDLSKEQYQKLNNFIYRRSIGEPIAYIIGKKEFWSLSLCVSYKTLIPRPDTEILVEKILSKVNKNFRSILDLGTGSGAIALALASVCSHWNIIGVDNSYSALKIAKINGLKLNLKNVEFFYSNWFSHINEKFHIIVSNPPYIGIKEIQSLKKDIFYEPFNALISKKDGLLDIELIIQKASQYLFDKGWLFIEHGWKQKLKVQYFFKKYNFFCIQSFKDYGGNDRITFGQKK</sequence>
<evidence type="ECO:0000255" key="1">
    <source>
        <dbReference type="HAMAP-Rule" id="MF_02126"/>
    </source>
</evidence>
<protein>
    <recommendedName>
        <fullName evidence="1">Release factor glutamine methyltransferase</fullName>
        <shortName evidence="1">RF MTase</shortName>
        <ecNumber evidence="1">2.1.1.297</ecNumber>
    </recommendedName>
    <alternativeName>
        <fullName evidence="1">N5-glutamine methyltransferase PrmC</fullName>
    </alternativeName>
    <alternativeName>
        <fullName evidence="1">Protein-(glutamine-N5) MTase PrmC</fullName>
    </alternativeName>
    <alternativeName>
        <fullName evidence="1">Protein-glutamine N-methyltransferase PrmC</fullName>
    </alternativeName>
</protein>
<reference key="1">
    <citation type="journal article" date="2002" name="Science">
        <title>50 million years of genomic stasis in endosymbiotic bacteria.</title>
        <authorList>
            <person name="Tamas I."/>
            <person name="Klasson L."/>
            <person name="Canbaeck B."/>
            <person name="Naeslund A.K."/>
            <person name="Eriksson A.-S."/>
            <person name="Wernegreen J.J."/>
            <person name="Sandstroem J.P."/>
            <person name="Moran N.A."/>
            <person name="Andersson S.G.E."/>
        </authorList>
    </citation>
    <scope>NUCLEOTIDE SEQUENCE [LARGE SCALE GENOMIC DNA]</scope>
    <source>
        <strain>Sg</strain>
    </source>
</reference>
<accession>Q8K9W9</accession>